<feature type="chain" id="PRO_0000189164" description="1-deoxy-D-xylulose-5-phosphate synthase">
    <location>
        <begin position="1"/>
        <end position="608"/>
    </location>
</feature>
<feature type="binding site" evidence="1">
    <location>
        <position position="66"/>
    </location>
    <ligand>
        <name>thiamine diphosphate</name>
        <dbReference type="ChEBI" id="CHEBI:58937"/>
    </ligand>
</feature>
<feature type="binding site" evidence="1">
    <location>
        <begin position="107"/>
        <end position="109"/>
    </location>
    <ligand>
        <name>thiamine diphosphate</name>
        <dbReference type="ChEBI" id="CHEBI:58937"/>
    </ligand>
</feature>
<feature type="binding site" evidence="1">
    <location>
        <position position="138"/>
    </location>
    <ligand>
        <name>Mg(2+)</name>
        <dbReference type="ChEBI" id="CHEBI:18420"/>
    </ligand>
</feature>
<feature type="binding site" evidence="1">
    <location>
        <begin position="139"/>
        <end position="140"/>
    </location>
    <ligand>
        <name>thiamine diphosphate</name>
        <dbReference type="ChEBI" id="CHEBI:58937"/>
    </ligand>
</feature>
<feature type="binding site" evidence="1">
    <location>
        <position position="167"/>
    </location>
    <ligand>
        <name>Mg(2+)</name>
        <dbReference type="ChEBI" id="CHEBI:18420"/>
    </ligand>
</feature>
<feature type="binding site" evidence="1">
    <location>
        <position position="167"/>
    </location>
    <ligand>
        <name>thiamine diphosphate</name>
        <dbReference type="ChEBI" id="CHEBI:58937"/>
    </ligand>
</feature>
<feature type="binding site" evidence="1">
    <location>
        <position position="277"/>
    </location>
    <ligand>
        <name>thiamine diphosphate</name>
        <dbReference type="ChEBI" id="CHEBI:58937"/>
    </ligand>
</feature>
<feature type="binding site" evidence="1">
    <location>
        <position position="350"/>
    </location>
    <ligand>
        <name>thiamine diphosphate</name>
        <dbReference type="ChEBI" id="CHEBI:58937"/>
    </ligand>
</feature>
<accession>Q9X291</accession>
<reference key="1">
    <citation type="journal article" date="1999" name="Nature">
        <title>Evidence for lateral gene transfer between Archaea and Bacteria from genome sequence of Thermotoga maritima.</title>
        <authorList>
            <person name="Nelson K.E."/>
            <person name="Clayton R.A."/>
            <person name="Gill S.R."/>
            <person name="Gwinn M.L."/>
            <person name="Dodson R.J."/>
            <person name="Haft D.H."/>
            <person name="Hickey E.K."/>
            <person name="Peterson J.D."/>
            <person name="Nelson W.C."/>
            <person name="Ketchum K.A."/>
            <person name="McDonald L.A."/>
            <person name="Utterback T.R."/>
            <person name="Malek J.A."/>
            <person name="Linher K.D."/>
            <person name="Garrett M.M."/>
            <person name="Stewart A.M."/>
            <person name="Cotton M.D."/>
            <person name="Pratt M.S."/>
            <person name="Phillips C.A."/>
            <person name="Richardson D.L."/>
            <person name="Heidelberg J.F."/>
            <person name="Sutton G.G."/>
            <person name="Fleischmann R.D."/>
            <person name="Eisen J.A."/>
            <person name="White O."/>
            <person name="Salzberg S.L."/>
            <person name="Smith H.O."/>
            <person name="Venter J.C."/>
            <person name="Fraser C.M."/>
        </authorList>
    </citation>
    <scope>NUCLEOTIDE SEQUENCE [LARGE SCALE GENOMIC DNA]</scope>
    <source>
        <strain>ATCC 43589 / DSM 3109 / JCM 10099 / NBRC 100826 / MSB8</strain>
    </source>
</reference>
<gene>
    <name evidence="1" type="primary">dxs</name>
    <name type="ordered locus">TM_1770</name>
</gene>
<proteinExistence type="inferred from homology"/>
<protein>
    <recommendedName>
        <fullName evidence="1">1-deoxy-D-xylulose-5-phosphate synthase</fullName>
        <ecNumber evidence="1">2.2.1.7</ecNumber>
    </recommendedName>
    <alternativeName>
        <fullName evidence="1">1-deoxyxylulose-5-phosphate synthase</fullName>
        <shortName evidence="1">DXP synthase</shortName>
        <shortName evidence="1">DXPS</shortName>
    </alternativeName>
</protein>
<evidence type="ECO:0000255" key="1">
    <source>
        <dbReference type="HAMAP-Rule" id="MF_00315"/>
    </source>
</evidence>
<name>DXS_THEMA</name>
<dbReference type="EC" id="2.2.1.7" evidence="1"/>
<dbReference type="EMBL" id="AE000512">
    <property type="protein sequence ID" value="AAD36833.1"/>
    <property type="molecule type" value="Genomic_DNA"/>
</dbReference>
<dbReference type="PIR" id="A72213">
    <property type="entry name" value="A72213"/>
</dbReference>
<dbReference type="RefSeq" id="NP_229567.1">
    <property type="nucleotide sequence ID" value="NC_000853.1"/>
</dbReference>
<dbReference type="RefSeq" id="WP_004082316.1">
    <property type="nucleotide sequence ID" value="NC_000853.1"/>
</dbReference>
<dbReference type="SMR" id="Q9X291"/>
<dbReference type="FunCoup" id="Q9X291">
    <property type="interactions" value="310"/>
</dbReference>
<dbReference type="STRING" id="243274.TM_1770"/>
<dbReference type="PaxDb" id="243274-THEMA_05375"/>
<dbReference type="EnsemblBacteria" id="AAD36833">
    <property type="protein sequence ID" value="AAD36833"/>
    <property type="gene ID" value="TM_1770"/>
</dbReference>
<dbReference type="KEGG" id="tma:TM1770"/>
<dbReference type="KEGG" id="tmi:THEMA_05375"/>
<dbReference type="KEGG" id="tmm:Tmari_1779"/>
<dbReference type="KEGG" id="tmw:THMA_1814"/>
<dbReference type="eggNOG" id="COG1154">
    <property type="taxonomic scope" value="Bacteria"/>
</dbReference>
<dbReference type="InParanoid" id="Q9X291"/>
<dbReference type="OrthoDB" id="9803371at2"/>
<dbReference type="UniPathway" id="UPA00064">
    <property type="reaction ID" value="UER00091"/>
</dbReference>
<dbReference type="Proteomes" id="UP000008183">
    <property type="component" value="Chromosome"/>
</dbReference>
<dbReference type="GO" id="GO:0005829">
    <property type="term" value="C:cytosol"/>
    <property type="evidence" value="ECO:0000318"/>
    <property type="project" value="GO_Central"/>
</dbReference>
<dbReference type="GO" id="GO:0008661">
    <property type="term" value="F:1-deoxy-D-xylulose-5-phosphate synthase activity"/>
    <property type="evidence" value="ECO:0000318"/>
    <property type="project" value="GO_Central"/>
</dbReference>
<dbReference type="GO" id="GO:0000287">
    <property type="term" value="F:magnesium ion binding"/>
    <property type="evidence" value="ECO:0007669"/>
    <property type="project" value="UniProtKB-UniRule"/>
</dbReference>
<dbReference type="GO" id="GO:0030976">
    <property type="term" value="F:thiamine pyrophosphate binding"/>
    <property type="evidence" value="ECO:0007669"/>
    <property type="project" value="UniProtKB-UniRule"/>
</dbReference>
<dbReference type="GO" id="GO:0052865">
    <property type="term" value="P:1-deoxy-D-xylulose 5-phosphate biosynthetic process"/>
    <property type="evidence" value="ECO:0007669"/>
    <property type="project" value="UniProtKB-UniPathway"/>
</dbReference>
<dbReference type="GO" id="GO:0019288">
    <property type="term" value="P:isopentenyl diphosphate biosynthetic process, methylerythritol 4-phosphate pathway"/>
    <property type="evidence" value="ECO:0000318"/>
    <property type="project" value="GO_Central"/>
</dbReference>
<dbReference type="GO" id="GO:0016114">
    <property type="term" value="P:terpenoid biosynthetic process"/>
    <property type="evidence" value="ECO:0007669"/>
    <property type="project" value="UniProtKB-UniRule"/>
</dbReference>
<dbReference type="GO" id="GO:0009228">
    <property type="term" value="P:thiamine biosynthetic process"/>
    <property type="evidence" value="ECO:0007669"/>
    <property type="project" value="UniProtKB-UniRule"/>
</dbReference>
<dbReference type="CDD" id="cd02007">
    <property type="entry name" value="TPP_DXS"/>
    <property type="match status" value="1"/>
</dbReference>
<dbReference type="CDD" id="cd07033">
    <property type="entry name" value="TPP_PYR_DXS_TK_like"/>
    <property type="match status" value="1"/>
</dbReference>
<dbReference type="FunFam" id="3.40.50.970:FF:000005">
    <property type="entry name" value="1-deoxy-D-xylulose-5-phosphate synthase"/>
    <property type="match status" value="1"/>
</dbReference>
<dbReference type="Gene3D" id="3.40.50.920">
    <property type="match status" value="1"/>
</dbReference>
<dbReference type="Gene3D" id="3.40.50.970">
    <property type="match status" value="2"/>
</dbReference>
<dbReference type="HAMAP" id="MF_00315">
    <property type="entry name" value="DXP_synth"/>
    <property type="match status" value="1"/>
</dbReference>
<dbReference type="InterPro" id="IPR005477">
    <property type="entry name" value="Dxylulose-5-P_synthase"/>
</dbReference>
<dbReference type="InterPro" id="IPR029061">
    <property type="entry name" value="THDP-binding"/>
</dbReference>
<dbReference type="InterPro" id="IPR009014">
    <property type="entry name" value="Transketo_C/PFOR_II"/>
</dbReference>
<dbReference type="InterPro" id="IPR005475">
    <property type="entry name" value="Transketolase-like_Pyr-bd"/>
</dbReference>
<dbReference type="InterPro" id="IPR033248">
    <property type="entry name" value="Transketolase_C"/>
</dbReference>
<dbReference type="InterPro" id="IPR049557">
    <property type="entry name" value="Transketolase_CS"/>
</dbReference>
<dbReference type="NCBIfam" id="TIGR00204">
    <property type="entry name" value="dxs"/>
    <property type="match status" value="1"/>
</dbReference>
<dbReference type="NCBIfam" id="NF003933">
    <property type="entry name" value="PRK05444.2-2"/>
    <property type="match status" value="1"/>
</dbReference>
<dbReference type="PANTHER" id="PTHR43322">
    <property type="entry name" value="1-D-DEOXYXYLULOSE 5-PHOSPHATE SYNTHASE-RELATED"/>
    <property type="match status" value="1"/>
</dbReference>
<dbReference type="PANTHER" id="PTHR43322:SF5">
    <property type="entry name" value="1-DEOXY-D-XYLULOSE-5-PHOSPHATE SYNTHASE, CHLOROPLASTIC"/>
    <property type="match status" value="1"/>
</dbReference>
<dbReference type="Pfam" id="PF13292">
    <property type="entry name" value="DXP_synthase_N"/>
    <property type="match status" value="1"/>
</dbReference>
<dbReference type="Pfam" id="PF02779">
    <property type="entry name" value="Transket_pyr"/>
    <property type="match status" value="1"/>
</dbReference>
<dbReference type="Pfam" id="PF02780">
    <property type="entry name" value="Transketolase_C"/>
    <property type="match status" value="1"/>
</dbReference>
<dbReference type="SMART" id="SM00861">
    <property type="entry name" value="Transket_pyr"/>
    <property type="match status" value="1"/>
</dbReference>
<dbReference type="SUPFAM" id="SSF52518">
    <property type="entry name" value="Thiamin diphosphate-binding fold (THDP-binding)"/>
    <property type="match status" value="2"/>
</dbReference>
<dbReference type="SUPFAM" id="SSF52922">
    <property type="entry name" value="TK C-terminal domain-like"/>
    <property type="match status" value="1"/>
</dbReference>
<dbReference type="PROSITE" id="PS00801">
    <property type="entry name" value="TRANSKETOLASE_1"/>
    <property type="match status" value="1"/>
</dbReference>
<sequence>MLLDEIKRMSYDELKRLAEDIRKRITEVVLKNGGHLASNLGTIELTLALYRVFDPREDAIIWDTGHQAYTHKILTGRDDLFHTIRTFGGLSGFVTRRESPLDWFGTGHAGTSIAAGLGFEKAFELLGEKRHVVVVIGDGALTSGMALEALNQLKNLNSKMKIILNDNGMSISPNVGGLAYHLSKLRTSPIYLKGKKVLKKVLEKTEIGFEVEEEMKYLRDSLKGMIQGTNFFESLGLKYFGPFDGHNIELLEKVFKRIRDYDYSSVVHVVTKKGKGFTAAEENPTKYHSASPSGKPKMLSYSELLGHTLSRVAREDKKIVAITAAMADGTGLSIFQKEHPDRFFDLGITEQTCVTFGAALGLHGMKPVVAIYSTFLQRAYDQIIHDVALQNAPVLFAIDRSGVVGEDGPTHHGLFDINYLLPVPNMKIISPSSPEEFVNSLYTVLKHLDGPVAIRYPKESFYGEVESLLENMKEIDLGWKILKRGREAAIIATGTILNEVLKIPLDVTVVNALTVKPLDTAVLKEIARDHDLIITVEEAMKIGGFGSFVAQRLQEMGWQGKIVNLGVEDLFVPHGGRKELLSMLGLDSEGLTKTVLTYIKARSREGKV</sequence>
<comment type="function">
    <text evidence="1">Catalyzes the acyloin condensation reaction between C atoms 2 and 3 of pyruvate and glyceraldehyde 3-phosphate to yield 1-deoxy-D-xylulose-5-phosphate (DXP).</text>
</comment>
<comment type="catalytic activity">
    <reaction evidence="1">
        <text>D-glyceraldehyde 3-phosphate + pyruvate + H(+) = 1-deoxy-D-xylulose 5-phosphate + CO2</text>
        <dbReference type="Rhea" id="RHEA:12605"/>
        <dbReference type="ChEBI" id="CHEBI:15361"/>
        <dbReference type="ChEBI" id="CHEBI:15378"/>
        <dbReference type="ChEBI" id="CHEBI:16526"/>
        <dbReference type="ChEBI" id="CHEBI:57792"/>
        <dbReference type="ChEBI" id="CHEBI:59776"/>
        <dbReference type="EC" id="2.2.1.7"/>
    </reaction>
</comment>
<comment type="cofactor">
    <cofactor evidence="1">
        <name>Mg(2+)</name>
        <dbReference type="ChEBI" id="CHEBI:18420"/>
    </cofactor>
    <text evidence="1">Binds 1 Mg(2+) ion per subunit.</text>
</comment>
<comment type="cofactor">
    <cofactor evidence="1">
        <name>thiamine diphosphate</name>
        <dbReference type="ChEBI" id="CHEBI:58937"/>
    </cofactor>
    <text evidence="1">Binds 1 thiamine pyrophosphate per subunit.</text>
</comment>
<comment type="pathway">
    <text evidence="1">Metabolic intermediate biosynthesis; 1-deoxy-D-xylulose 5-phosphate biosynthesis; 1-deoxy-D-xylulose 5-phosphate from D-glyceraldehyde 3-phosphate and pyruvate: step 1/1.</text>
</comment>
<comment type="subunit">
    <text evidence="1">Homodimer.</text>
</comment>
<comment type="similarity">
    <text evidence="1">Belongs to the transketolase family. DXPS subfamily.</text>
</comment>
<keyword id="KW-0414">Isoprene biosynthesis</keyword>
<keyword id="KW-0460">Magnesium</keyword>
<keyword id="KW-0479">Metal-binding</keyword>
<keyword id="KW-1185">Reference proteome</keyword>
<keyword id="KW-0784">Thiamine biosynthesis</keyword>
<keyword id="KW-0786">Thiamine pyrophosphate</keyword>
<keyword id="KW-0808">Transferase</keyword>
<organism>
    <name type="scientific">Thermotoga maritima (strain ATCC 43589 / DSM 3109 / JCM 10099 / NBRC 100826 / MSB8)</name>
    <dbReference type="NCBI Taxonomy" id="243274"/>
    <lineage>
        <taxon>Bacteria</taxon>
        <taxon>Thermotogati</taxon>
        <taxon>Thermotogota</taxon>
        <taxon>Thermotogae</taxon>
        <taxon>Thermotogales</taxon>
        <taxon>Thermotogaceae</taxon>
        <taxon>Thermotoga</taxon>
    </lineage>
</organism>